<gene>
    <name evidence="1" type="primary">bioA</name>
    <name type="ordered locus">STM0793</name>
</gene>
<protein>
    <recommendedName>
        <fullName evidence="1">Adenosylmethionine-8-amino-7-oxononanoate aminotransferase</fullName>
        <ecNumber evidence="1">2.6.1.62</ecNumber>
    </recommendedName>
    <alternativeName>
        <fullName evidence="1">7,8-diamino-pelargonic acid aminotransferase</fullName>
        <shortName evidence="1">DAPA AT</shortName>
        <shortName evidence="1">DAPA aminotransferase</shortName>
    </alternativeName>
    <alternativeName>
        <fullName evidence="1">7,8-diaminononanoate synthase</fullName>
        <shortName evidence="1">DANS</shortName>
    </alternativeName>
    <alternativeName>
        <fullName evidence="1">Diaminopelargonic acid synthase</fullName>
    </alternativeName>
</protein>
<accession>P12677</accession>
<keyword id="KW-0032">Aminotransferase</keyword>
<keyword id="KW-0093">Biotin biosynthesis</keyword>
<keyword id="KW-0963">Cytoplasm</keyword>
<keyword id="KW-0663">Pyridoxal phosphate</keyword>
<keyword id="KW-1185">Reference proteome</keyword>
<keyword id="KW-0949">S-adenosyl-L-methionine</keyword>
<keyword id="KW-0808">Transferase</keyword>
<name>BIOA_SALTY</name>
<dbReference type="EC" id="2.6.1.62" evidence="1"/>
<dbReference type="EMBL" id="AE006468">
    <property type="protein sequence ID" value="AAL19730.1"/>
    <property type="molecule type" value="Genomic_DNA"/>
</dbReference>
<dbReference type="EMBL" id="M21923">
    <property type="status" value="NOT_ANNOTATED_CDS"/>
    <property type="molecule type" value="Genomic_DNA"/>
</dbReference>
<dbReference type="RefSeq" id="NP_459771.1">
    <property type="nucleotide sequence ID" value="NC_003197.2"/>
</dbReference>
<dbReference type="RefSeq" id="WP_000205518.1">
    <property type="nucleotide sequence ID" value="NC_003197.2"/>
</dbReference>
<dbReference type="SMR" id="P12677"/>
<dbReference type="STRING" id="99287.STM0793"/>
<dbReference type="PaxDb" id="99287-STM0793"/>
<dbReference type="GeneID" id="1252313"/>
<dbReference type="KEGG" id="stm:STM0793"/>
<dbReference type="PATRIC" id="fig|99287.12.peg.827"/>
<dbReference type="HOGENOM" id="CLU_016922_4_3_6"/>
<dbReference type="OMA" id="YTMPPYV"/>
<dbReference type="PhylomeDB" id="P12677"/>
<dbReference type="BioCyc" id="SENT99287:STM0793-MONOMER"/>
<dbReference type="UniPathway" id="UPA00078">
    <property type="reaction ID" value="UER00160"/>
</dbReference>
<dbReference type="Proteomes" id="UP000001014">
    <property type="component" value="Chromosome"/>
</dbReference>
<dbReference type="GO" id="GO:0005737">
    <property type="term" value="C:cytoplasm"/>
    <property type="evidence" value="ECO:0007669"/>
    <property type="project" value="UniProtKB-SubCell"/>
</dbReference>
<dbReference type="GO" id="GO:0004015">
    <property type="term" value="F:adenosylmethionine-8-amino-7-oxononanoate transaminase activity"/>
    <property type="evidence" value="ECO:0000318"/>
    <property type="project" value="GO_Central"/>
</dbReference>
<dbReference type="GO" id="GO:0030170">
    <property type="term" value="F:pyridoxal phosphate binding"/>
    <property type="evidence" value="ECO:0007669"/>
    <property type="project" value="UniProtKB-UniRule"/>
</dbReference>
<dbReference type="GO" id="GO:0009102">
    <property type="term" value="P:biotin biosynthetic process"/>
    <property type="evidence" value="ECO:0000318"/>
    <property type="project" value="GO_Central"/>
</dbReference>
<dbReference type="CDD" id="cd00610">
    <property type="entry name" value="OAT_like"/>
    <property type="match status" value="1"/>
</dbReference>
<dbReference type="FunFam" id="3.40.640.10:FF:000041">
    <property type="entry name" value="Adenosylmethionine-8-amino-7-oxononanoate aminotransferase"/>
    <property type="match status" value="1"/>
</dbReference>
<dbReference type="Gene3D" id="3.90.1150.10">
    <property type="entry name" value="Aspartate Aminotransferase, domain 1"/>
    <property type="match status" value="1"/>
</dbReference>
<dbReference type="Gene3D" id="3.40.640.10">
    <property type="entry name" value="Type I PLP-dependent aspartate aminotransferase-like (Major domain)"/>
    <property type="match status" value="1"/>
</dbReference>
<dbReference type="HAMAP" id="MF_00834">
    <property type="entry name" value="BioA"/>
    <property type="match status" value="1"/>
</dbReference>
<dbReference type="InterPro" id="IPR005814">
    <property type="entry name" value="Aminotrans_3"/>
</dbReference>
<dbReference type="InterPro" id="IPR049704">
    <property type="entry name" value="Aminotrans_3_PPA_site"/>
</dbReference>
<dbReference type="InterPro" id="IPR005815">
    <property type="entry name" value="BioA"/>
</dbReference>
<dbReference type="InterPro" id="IPR015424">
    <property type="entry name" value="PyrdxlP-dep_Trfase"/>
</dbReference>
<dbReference type="InterPro" id="IPR015421">
    <property type="entry name" value="PyrdxlP-dep_Trfase_major"/>
</dbReference>
<dbReference type="InterPro" id="IPR015422">
    <property type="entry name" value="PyrdxlP-dep_Trfase_small"/>
</dbReference>
<dbReference type="NCBIfam" id="TIGR00508">
    <property type="entry name" value="bioA"/>
    <property type="match status" value="1"/>
</dbReference>
<dbReference type="NCBIfam" id="NF004624">
    <property type="entry name" value="PRK05964.1"/>
    <property type="match status" value="1"/>
</dbReference>
<dbReference type="NCBIfam" id="NF005940">
    <property type="entry name" value="PRK07986.1"/>
    <property type="match status" value="1"/>
</dbReference>
<dbReference type="PANTHER" id="PTHR42684">
    <property type="entry name" value="ADENOSYLMETHIONINE-8-AMINO-7-OXONONANOATE AMINOTRANSFERASE"/>
    <property type="match status" value="1"/>
</dbReference>
<dbReference type="PANTHER" id="PTHR42684:SF17">
    <property type="entry name" value="ADENOSYLMETHIONINE-8-AMINO-7-OXONONANOATE AMINOTRANSFERASE"/>
    <property type="match status" value="1"/>
</dbReference>
<dbReference type="Pfam" id="PF00202">
    <property type="entry name" value="Aminotran_3"/>
    <property type="match status" value="1"/>
</dbReference>
<dbReference type="SUPFAM" id="SSF53383">
    <property type="entry name" value="PLP-dependent transferases"/>
    <property type="match status" value="1"/>
</dbReference>
<dbReference type="PROSITE" id="PS00600">
    <property type="entry name" value="AA_TRANSFER_CLASS_3"/>
    <property type="match status" value="1"/>
</dbReference>
<comment type="function">
    <text evidence="1">Catalyzes the transfer of the alpha-amino group from S-adenosyl-L-methionine (SAM) to 7-keto-8-aminopelargonic acid (KAPA) to form 7,8-diaminopelargonic acid (DAPA). It is the only aminotransferase known to utilize SAM as an amino donor.</text>
</comment>
<comment type="catalytic activity">
    <reaction evidence="1">
        <text>(8S)-8-amino-7-oxononanoate + S-adenosyl-L-methionine = S-adenosyl-4-methylsulfanyl-2-oxobutanoate + (7R,8S)-7,8-diammoniononanoate</text>
        <dbReference type="Rhea" id="RHEA:16861"/>
        <dbReference type="ChEBI" id="CHEBI:16490"/>
        <dbReference type="ChEBI" id="CHEBI:59789"/>
        <dbReference type="ChEBI" id="CHEBI:149468"/>
        <dbReference type="ChEBI" id="CHEBI:149469"/>
        <dbReference type="EC" id="2.6.1.62"/>
    </reaction>
</comment>
<comment type="cofactor">
    <cofactor evidence="1">
        <name>pyridoxal 5'-phosphate</name>
        <dbReference type="ChEBI" id="CHEBI:597326"/>
    </cofactor>
</comment>
<comment type="pathway">
    <text evidence="1">Cofactor biosynthesis; biotin biosynthesis; 7,8-diaminononanoate from 8-amino-7-oxononanoate (SAM route): step 1/1.</text>
</comment>
<comment type="subunit">
    <text evidence="1">Homodimer.</text>
</comment>
<comment type="subcellular location">
    <subcellularLocation>
        <location evidence="1">Cytoplasm</location>
    </subcellularLocation>
</comment>
<comment type="similarity">
    <text evidence="1">Belongs to the class-III pyridoxal-phosphate-dependent aminotransferase family. BioA subfamily.</text>
</comment>
<proteinExistence type="inferred from homology"/>
<evidence type="ECO:0000255" key="1">
    <source>
        <dbReference type="HAMAP-Rule" id="MF_00834"/>
    </source>
</evidence>
<sequence length="429" mass="47353">MTTDDLAFDKRHIWHPYTSMTSPLPVYPVERAEGCELVLASGKRLIEGMSSWWAAIHGYNHPQLNAAMKAQIDAMSHVMFGGITHQPAVNLCRKLVAITPEPLECVFLADSGSVSVEVAMKMALQYWQARGESRQRFLTFRHGYHGDTFGAMSVCDPDNSMHSLWKGYLPENLFAPAPQSRMDGEWDESDIAPFARLMAAHRHEIAAVILEPIVQGAGGMRIYHPQWLRRIRNMCDREGILLIADEIATGFGRTGKLFACEHAGIAPDILCLGKALTGGTMTLSATLTTRQVAETISNGEAGCFMHGPTFMGNPLACAVACANLTLLESGEWRQQVASIESQLRAELAPAQSSPWVADVRVLGAIGVVETTHPVNMAALQRFFVGQGVWIRPFGKLIYLMPPYIIRPDQLRRLTQAVNDAVHNETFFSH</sequence>
<organism>
    <name type="scientific">Salmonella typhimurium (strain LT2 / SGSC1412 / ATCC 700720)</name>
    <dbReference type="NCBI Taxonomy" id="99287"/>
    <lineage>
        <taxon>Bacteria</taxon>
        <taxon>Pseudomonadati</taxon>
        <taxon>Pseudomonadota</taxon>
        <taxon>Gammaproteobacteria</taxon>
        <taxon>Enterobacterales</taxon>
        <taxon>Enterobacteriaceae</taxon>
        <taxon>Salmonella</taxon>
    </lineage>
</organism>
<reference key="1">
    <citation type="journal article" date="2001" name="Nature">
        <title>Complete genome sequence of Salmonella enterica serovar Typhimurium LT2.</title>
        <authorList>
            <person name="McClelland M."/>
            <person name="Sanderson K.E."/>
            <person name="Spieth J."/>
            <person name="Clifton S.W."/>
            <person name="Latreille P."/>
            <person name="Courtney L."/>
            <person name="Porwollik S."/>
            <person name="Ali J."/>
            <person name="Dante M."/>
            <person name="Du F."/>
            <person name="Hou S."/>
            <person name="Layman D."/>
            <person name="Leonard S."/>
            <person name="Nguyen C."/>
            <person name="Scott K."/>
            <person name="Holmes A."/>
            <person name="Grewal N."/>
            <person name="Mulvaney E."/>
            <person name="Ryan E."/>
            <person name="Sun H."/>
            <person name="Florea L."/>
            <person name="Miller W."/>
            <person name="Stoneking T."/>
            <person name="Nhan M."/>
            <person name="Waterston R."/>
            <person name="Wilson R.K."/>
        </authorList>
    </citation>
    <scope>NUCLEOTIDE SEQUENCE [LARGE SCALE GENOMIC DNA]</scope>
    <source>
        <strain>LT2 / SGSC1412 / ATCC 700720</strain>
    </source>
</reference>
<reference key="2">
    <citation type="journal article" date="1988" name="Gene">
        <title>Transcriptional regulation and gene arrangement of Escherichia coli, Citrobacter freundii and Salmonella typhimurium biotin operons.</title>
        <authorList>
            <person name="Shiuan D."/>
            <person name="Campbell A."/>
        </authorList>
    </citation>
    <scope>NUCLEOTIDE SEQUENCE [GENOMIC DNA] OF 1-5</scope>
</reference>
<feature type="chain" id="PRO_0000120375" description="Adenosylmethionine-8-amino-7-oxononanoate aminotransferase">
    <location>
        <begin position="1"/>
        <end position="429"/>
    </location>
</feature>
<feature type="binding site" evidence="1">
    <location>
        <position position="52"/>
    </location>
    <ligand>
        <name>substrate</name>
    </ligand>
</feature>
<feature type="binding site" evidence="1">
    <location>
        <begin position="112"/>
        <end position="113"/>
    </location>
    <ligand>
        <name>pyridoxal 5'-phosphate</name>
        <dbReference type="ChEBI" id="CHEBI:597326"/>
    </ligand>
</feature>
<feature type="binding site" evidence="1">
    <location>
        <position position="144"/>
    </location>
    <ligand>
        <name>substrate</name>
    </ligand>
</feature>
<feature type="binding site" evidence="1">
    <location>
        <position position="245"/>
    </location>
    <ligand>
        <name>pyridoxal 5'-phosphate</name>
        <dbReference type="ChEBI" id="CHEBI:597326"/>
    </ligand>
</feature>
<feature type="binding site" evidence="1">
    <location>
        <position position="274"/>
    </location>
    <ligand>
        <name>substrate</name>
    </ligand>
</feature>
<feature type="binding site" evidence="1">
    <location>
        <position position="307"/>
    </location>
    <ligand>
        <name>substrate</name>
    </ligand>
</feature>
<feature type="binding site" evidence="1">
    <location>
        <begin position="308"/>
        <end position="309"/>
    </location>
    <ligand>
        <name>pyridoxal 5'-phosphate</name>
        <dbReference type="ChEBI" id="CHEBI:597326"/>
    </ligand>
</feature>
<feature type="binding site" evidence="1">
    <location>
        <position position="391"/>
    </location>
    <ligand>
        <name>substrate</name>
    </ligand>
</feature>
<feature type="site" description="Participates in the substrate recognition with KAPA and in a stacking interaction with the adenine ring of SAM" evidence="1">
    <location>
        <position position="17"/>
    </location>
</feature>
<feature type="modified residue" description="N6-(pyridoxal phosphate)lysine" evidence="1">
    <location>
        <position position="274"/>
    </location>
</feature>